<name>ACCD_NOSP7</name>
<organism>
    <name type="scientific">Nostoc punctiforme (strain ATCC 29133 / PCC 73102)</name>
    <dbReference type="NCBI Taxonomy" id="63737"/>
    <lineage>
        <taxon>Bacteria</taxon>
        <taxon>Bacillati</taxon>
        <taxon>Cyanobacteriota</taxon>
        <taxon>Cyanophyceae</taxon>
        <taxon>Nostocales</taxon>
        <taxon>Nostocaceae</taxon>
        <taxon>Nostoc</taxon>
    </lineage>
</organism>
<protein>
    <recommendedName>
        <fullName evidence="1">Acetyl-coenzyme A carboxylase carboxyl transferase subunit beta</fullName>
        <shortName evidence="1">ACCase subunit beta</shortName>
        <shortName evidence="1">Acetyl-CoA carboxylase carboxyltransferase subunit beta</shortName>
        <ecNumber evidence="1">2.1.3.15</ecNumber>
    </recommendedName>
</protein>
<sequence>MANNEESRGLKSLFDWFANRRKSGSTSLERQEREIADGLWHKCSKCGVLAYTKDLKANQMVCIECGHHNRVDSDERIRQLIDNNTWKPLDEHLRPTDPLEFRDRKLYSDRLRETQDKIGLIDAVRTGLGQINGLPIALGVMDFRFMGGSMGSVVGEKLTRMIEQATQRRYPVVIICTSGGARMQEGMLSLMQMAKISAALQRHKDARLLYIPVLTNPTTGGVTASFAMLGDIILAEPKATIGFAGRRVIEQTLREKLPENFQTAEDLLQHGFVDDIVPRTQLKNTLAQLIALHQPVLTPPHMVLWETMSLTSTAAE</sequence>
<dbReference type="EC" id="2.1.3.15" evidence="1"/>
<dbReference type="EMBL" id="CP001037">
    <property type="protein sequence ID" value="ACC81332.1"/>
    <property type="molecule type" value="Genomic_DNA"/>
</dbReference>
<dbReference type="RefSeq" id="WP_012409325.1">
    <property type="nucleotide sequence ID" value="NC_010628.1"/>
</dbReference>
<dbReference type="SMR" id="B2IVE7"/>
<dbReference type="STRING" id="63737.Npun_R2799"/>
<dbReference type="EnsemblBacteria" id="ACC81332">
    <property type="protein sequence ID" value="ACC81332"/>
    <property type="gene ID" value="Npun_R2799"/>
</dbReference>
<dbReference type="KEGG" id="npu:Npun_R2799"/>
<dbReference type="eggNOG" id="COG0777">
    <property type="taxonomic scope" value="Bacteria"/>
</dbReference>
<dbReference type="HOGENOM" id="CLU_015486_1_1_3"/>
<dbReference type="OrthoDB" id="9772975at2"/>
<dbReference type="PhylomeDB" id="B2IVE7"/>
<dbReference type="UniPathway" id="UPA00655">
    <property type="reaction ID" value="UER00711"/>
</dbReference>
<dbReference type="Proteomes" id="UP000001191">
    <property type="component" value="Chromosome"/>
</dbReference>
<dbReference type="GO" id="GO:0009317">
    <property type="term" value="C:acetyl-CoA carboxylase complex"/>
    <property type="evidence" value="ECO:0007669"/>
    <property type="project" value="InterPro"/>
</dbReference>
<dbReference type="GO" id="GO:0003989">
    <property type="term" value="F:acetyl-CoA carboxylase activity"/>
    <property type="evidence" value="ECO:0007669"/>
    <property type="project" value="InterPro"/>
</dbReference>
<dbReference type="GO" id="GO:0005524">
    <property type="term" value="F:ATP binding"/>
    <property type="evidence" value="ECO:0007669"/>
    <property type="project" value="UniProtKB-KW"/>
</dbReference>
<dbReference type="GO" id="GO:0016743">
    <property type="term" value="F:carboxyl- or carbamoyltransferase activity"/>
    <property type="evidence" value="ECO:0007669"/>
    <property type="project" value="UniProtKB-UniRule"/>
</dbReference>
<dbReference type="GO" id="GO:0008270">
    <property type="term" value="F:zinc ion binding"/>
    <property type="evidence" value="ECO:0007669"/>
    <property type="project" value="UniProtKB-UniRule"/>
</dbReference>
<dbReference type="GO" id="GO:0006633">
    <property type="term" value="P:fatty acid biosynthetic process"/>
    <property type="evidence" value="ECO:0007669"/>
    <property type="project" value="UniProtKB-KW"/>
</dbReference>
<dbReference type="GO" id="GO:2001295">
    <property type="term" value="P:malonyl-CoA biosynthetic process"/>
    <property type="evidence" value="ECO:0007669"/>
    <property type="project" value="UniProtKB-UniRule"/>
</dbReference>
<dbReference type="Gene3D" id="3.90.226.10">
    <property type="entry name" value="2-enoyl-CoA Hydratase, Chain A, domain 1"/>
    <property type="match status" value="1"/>
</dbReference>
<dbReference type="HAMAP" id="MF_01395">
    <property type="entry name" value="AcetylCoA_CT_beta"/>
    <property type="match status" value="1"/>
</dbReference>
<dbReference type="InterPro" id="IPR034733">
    <property type="entry name" value="AcCoA_carboxyl_beta"/>
</dbReference>
<dbReference type="InterPro" id="IPR000438">
    <property type="entry name" value="Acetyl_CoA_COase_Trfase_b_su"/>
</dbReference>
<dbReference type="InterPro" id="IPR029045">
    <property type="entry name" value="ClpP/crotonase-like_dom_sf"/>
</dbReference>
<dbReference type="InterPro" id="IPR011762">
    <property type="entry name" value="COA_CT_N"/>
</dbReference>
<dbReference type="InterPro" id="IPR041010">
    <property type="entry name" value="Znf-ACC"/>
</dbReference>
<dbReference type="NCBIfam" id="TIGR00515">
    <property type="entry name" value="accD"/>
    <property type="match status" value="1"/>
</dbReference>
<dbReference type="PANTHER" id="PTHR42995">
    <property type="entry name" value="ACETYL-COENZYME A CARBOXYLASE CARBOXYL TRANSFERASE SUBUNIT BETA, CHLOROPLASTIC"/>
    <property type="match status" value="1"/>
</dbReference>
<dbReference type="PANTHER" id="PTHR42995:SF5">
    <property type="entry name" value="ACETYL-COENZYME A CARBOXYLASE CARBOXYL TRANSFERASE SUBUNIT BETA, CHLOROPLASTIC"/>
    <property type="match status" value="1"/>
</dbReference>
<dbReference type="Pfam" id="PF01039">
    <property type="entry name" value="Carboxyl_trans"/>
    <property type="match status" value="1"/>
</dbReference>
<dbReference type="Pfam" id="PF17848">
    <property type="entry name" value="Zn_ribbon_ACC"/>
    <property type="match status" value="1"/>
</dbReference>
<dbReference type="PRINTS" id="PR01070">
    <property type="entry name" value="ACCCTRFRASEB"/>
</dbReference>
<dbReference type="SUPFAM" id="SSF52096">
    <property type="entry name" value="ClpP/crotonase"/>
    <property type="match status" value="1"/>
</dbReference>
<dbReference type="PROSITE" id="PS50980">
    <property type="entry name" value="COA_CT_NTER"/>
    <property type="match status" value="1"/>
</dbReference>
<evidence type="ECO:0000255" key="1">
    <source>
        <dbReference type="HAMAP-Rule" id="MF_01395"/>
    </source>
</evidence>
<evidence type="ECO:0000255" key="2">
    <source>
        <dbReference type="PROSITE-ProRule" id="PRU01136"/>
    </source>
</evidence>
<reference key="1">
    <citation type="journal article" date="2013" name="Plant Physiol.">
        <title>A Nostoc punctiforme Sugar Transporter Necessary to Establish a Cyanobacterium-Plant Symbiosis.</title>
        <authorList>
            <person name="Ekman M."/>
            <person name="Picossi S."/>
            <person name="Campbell E.L."/>
            <person name="Meeks J.C."/>
            <person name="Flores E."/>
        </authorList>
    </citation>
    <scope>NUCLEOTIDE SEQUENCE [LARGE SCALE GENOMIC DNA]</scope>
    <source>
        <strain>ATCC 29133 / PCC 73102</strain>
    </source>
</reference>
<feature type="chain" id="PRO_0000359012" description="Acetyl-coenzyme A carboxylase carboxyl transferase subunit beta">
    <location>
        <begin position="1"/>
        <end position="316"/>
    </location>
</feature>
<feature type="domain" description="CoA carboxyltransferase N-terminal" evidence="2">
    <location>
        <begin position="39"/>
        <end position="308"/>
    </location>
</feature>
<feature type="zinc finger region" description="C4-type" evidence="1">
    <location>
        <begin position="43"/>
        <end position="65"/>
    </location>
</feature>
<feature type="binding site" evidence="1">
    <location>
        <position position="43"/>
    </location>
    <ligand>
        <name>Zn(2+)</name>
        <dbReference type="ChEBI" id="CHEBI:29105"/>
    </ligand>
</feature>
<feature type="binding site" evidence="1">
    <location>
        <position position="46"/>
    </location>
    <ligand>
        <name>Zn(2+)</name>
        <dbReference type="ChEBI" id="CHEBI:29105"/>
    </ligand>
</feature>
<feature type="binding site" evidence="1">
    <location>
        <position position="62"/>
    </location>
    <ligand>
        <name>Zn(2+)</name>
        <dbReference type="ChEBI" id="CHEBI:29105"/>
    </ligand>
</feature>
<feature type="binding site" evidence="1">
    <location>
        <position position="65"/>
    </location>
    <ligand>
        <name>Zn(2+)</name>
        <dbReference type="ChEBI" id="CHEBI:29105"/>
    </ligand>
</feature>
<accession>B2IVE7</accession>
<proteinExistence type="inferred from homology"/>
<comment type="function">
    <text evidence="1">Component of the acetyl coenzyme A carboxylase (ACC) complex. Biotin carboxylase (BC) catalyzes the carboxylation of biotin on its carrier protein (BCCP) and then the CO(2) group is transferred by the transcarboxylase to acetyl-CoA to form malonyl-CoA.</text>
</comment>
<comment type="catalytic activity">
    <reaction evidence="1">
        <text>N(6)-carboxybiotinyl-L-lysyl-[protein] + acetyl-CoA = N(6)-biotinyl-L-lysyl-[protein] + malonyl-CoA</text>
        <dbReference type="Rhea" id="RHEA:54728"/>
        <dbReference type="Rhea" id="RHEA-COMP:10505"/>
        <dbReference type="Rhea" id="RHEA-COMP:10506"/>
        <dbReference type="ChEBI" id="CHEBI:57288"/>
        <dbReference type="ChEBI" id="CHEBI:57384"/>
        <dbReference type="ChEBI" id="CHEBI:83144"/>
        <dbReference type="ChEBI" id="CHEBI:83145"/>
        <dbReference type="EC" id="2.1.3.15"/>
    </reaction>
</comment>
<comment type="cofactor">
    <cofactor evidence="1">
        <name>Zn(2+)</name>
        <dbReference type="ChEBI" id="CHEBI:29105"/>
    </cofactor>
    <text evidence="1">Binds 1 zinc ion per subunit.</text>
</comment>
<comment type="pathway">
    <text evidence="1">Lipid metabolism; malonyl-CoA biosynthesis; malonyl-CoA from acetyl-CoA: step 1/1.</text>
</comment>
<comment type="subunit">
    <text evidence="1">Acetyl-CoA carboxylase is a heterohexamer composed of biotin carboxyl carrier protein (AccB), biotin carboxylase (AccC) and two subunits each of ACCase subunit alpha (AccA) and ACCase subunit beta (AccD).</text>
</comment>
<comment type="subcellular location">
    <subcellularLocation>
        <location evidence="1">Cytoplasm</location>
    </subcellularLocation>
</comment>
<comment type="similarity">
    <text evidence="1">Belongs to the AccD/PCCB family.</text>
</comment>
<keyword id="KW-0067">ATP-binding</keyword>
<keyword id="KW-0963">Cytoplasm</keyword>
<keyword id="KW-0275">Fatty acid biosynthesis</keyword>
<keyword id="KW-0276">Fatty acid metabolism</keyword>
<keyword id="KW-0444">Lipid biosynthesis</keyword>
<keyword id="KW-0443">Lipid metabolism</keyword>
<keyword id="KW-0479">Metal-binding</keyword>
<keyword id="KW-0547">Nucleotide-binding</keyword>
<keyword id="KW-1185">Reference proteome</keyword>
<keyword id="KW-0808">Transferase</keyword>
<keyword id="KW-0862">Zinc</keyword>
<keyword id="KW-0863">Zinc-finger</keyword>
<gene>
    <name evidence="1" type="primary">accD</name>
    <name type="ordered locus">Npun_R2799</name>
</gene>